<dbReference type="EMBL" id="M63535">
    <property type="protein sequence ID" value="AAA43333.1"/>
    <property type="molecule type" value="Genomic_RNA"/>
</dbReference>
<dbReference type="SMR" id="Q89687"/>
<dbReference type="GlyCosmos" id="Q89687">
    <property type="glycosylation" value="1 site, No reported glycans"/>
</dbReference>
<dbReference type="GO" id="GO:0020002">
    <property type="term" value="C:host cell plasma membrane"/>
    <property type="evidence" value="ECO:0007669"/>
    <property type="project" value="UniProtKB-SubCell"/>
</dbReference>
<dbReference type="GO" id="GO:0016020">
    <property type="term" value="C:membrane"/>
    <property type="evidence" value="ECO:0007669"/>
    <property type="project" value="UniProtKB-UniRule"/>
</dbReference>
<dbReference type="GO" id="GO:0055036">
    <property type="term" value="C:virion membrane"/>
    <property type="evidence" value="ECO:0007669"/>
    <property type="project" value="UniProtKB-SubCell"/>
</dbReference>
<dbReference type="GO" id="GO:0005216">
    <property type="term" value="F:monoatomic ion channel activity"/>
    <property type="evidence" value="ECO:0007669"/>
    <property type="project" value="UniProtKB-UniRule"/>
</dbReference>
<dbReference type="GO" id="GO:0015078">
    <property type="term" value="F:proton transmembrane transporter activity"/>
    <property type="evidence" value="ECO:0007669"/>
    <property type="project" value="UniProtKB-UniRule"/>
</dbReference>
<dbReference type="GO" id="GO:0051259">
    <property type="term" value="P:protein complex oligomerization"/>
    <property type="evidence" value="ECO:0007669"/>
    <property type="project" value="UniProtKB-UniRule"/>
</dbReference>
<dbReference type="GO" id="GO:0044694">
    <property type="term" value="P:symbiont genome entry into host cell via pore formation in plasma membrane"/>
    <property type="evidence" value="ECO:0007669"/>
    <property type="project" value="UniProtKB-UniRule"/>
</dbReference>
<dbReference type="GO" id="GO:0140321">
    <property type="term" value="P:symbiont-mediated suppression of host autophagy"/>
    <property type="evidence" value="ECO:0007669"/>
    <property type="project" value="UniProtKB-KW"/>
</dbReference>
<dbReference type="Gene3D" id="6.10.250.1640">
    <property type="match status" value="1"/>
</dbReference>
<dbReference type="HAMAP" id="MF_04069">
    <property type="entry name" value="INFV_M2"/>
    <property type="match status" value="1"/>
</dbReference>
<dbReference type="InterPro" id="IPR002089">
    <property type="entry name" value="Flu_M2"/>
</dbReference>
<dbReference type="Pfam" id="PF00599">
    <property type="entry name" value="Flu_M2"/>
    <property type="match status" value="1"/>
</dbReference>
<name>M2_I54A1</name>
<feature type="chain" id="PRO_0000326337" description="Matrix protein 2">
    <location>
        <begin position="1"/>
        <end position="97"/>
    </location>
</feature>
<feature type="topological domain" description="Virion surface" evidence="1">
    <location>
        <begin position="1"/>
        <end position="22"/>
    </location>
</feature>
<feature type="transmembrane region" description="Helical; Signal-anchor for type III membrane protein" evidence="1">
    <location>
        <begin position="23"/>
        <end position="43"/>
    </location>
</feature>
<feature type="topological domain" description="Intravirion" evidence="1">
    <location>
        <begin position="44"/>
        <end position="97"/>
    </location>
</feature>
<feature type="site" description="Essential for channel activity, possibly by being protonated during channel activation, and by forming the channel gate and the selective filter" evidence="1">
    <location>
        <position position="37"/>
    </location>
</feature>
<feature type="site" description="Seems to be involved in pH gating" evidence="1">
    <location>
        <position position="41"/>
    </location>
</feature>
<feature type="modified residue" description="Phosphoserine; by host" evidence="1">
    <location>
        <position position="64"/>
    </location>
</feature>
<feature type="modified residue" description="Phosphoserine; by host" evidence="1">
    <location>
        <position position="82"/>
    </location>
</feature>
<feature type="lipid moiety-binding region" description="S-palmitoyl cysteine; by host" evidence="1">
    <location>
        <position position="50"/>
    </location>
</feature>
<feature type="glycosylation site" description="N-linked (GlcNAc...) asparagine; by host" evidence="1">
    <location>
        <position position="20"/>
    </location>
</feature>
<feature type="disulfide bond" description="Interchain (with C-17)" evidence="1">
    <location>
        <position position="17"/>
    </location>
</feature>
<feature type="disulfide bond" description="Interchain (with C-19)" evidence="1">
    <location>
        <position position="19"/>
    </location>
</feature>
<keyword id="KW-0025">Alternative splicing</keyword>
<keyword id="KW-1015">Disulfide bond</keyword>
<keyword id="KW-0325">Glycoprotein</keyword>
<keyword id="KW-1032">Host cell membrane</keyword>
<keyword id="KW-1043">Host membrane</keyword>
<keyword id="KW-0945">Host-virus interaction</keyword>
<keyword id="KW-0375">Hydrogen ion transport</keyword>
<keyword id="KW-1083">Inhibition of host autophagy by virus</keyword>
<keyword id="KW-0407">Ion channel</keyword>
<keyword id="KW-0406">Ion transport</keyword>
<keyword id="KW-0449">Lipoprotein</keyword>
<keyword id="KW-0472">Membrane</keyword>
<keyword id="KW-0564">Palmitate</keyword>
<keyword id="KW-0597">Phosphoprotein</keyword>
<keyword id="KW-0735">Signal-anchor</keyword>
<keyword id="KW-0812">Transmembrane</keyword>
<keyword id="KW-1133">Transmembrane helix</keyword>
<keyword id="KW-0813">Transport</keyword>
<keyword id="KW-1182">Viral ion channel</keyword>
<keyword id="KW-0946">Virion</keyword>
<proteinExistence type="inferred from homology"/>
<organismHost>
    <name type="scientific">Aves</name>
    <dbReference type="NCBI Taxonomy" id="8782"/>
</organismHost>
<organismHost>
    <name type="scientific">Homo sapiens</name>
    <name type="common">Human</name>
    <dbReference type="NCBI Taxonomy" id="9606"/>
</organismHost>
<organismHost>
    <name type="scientific">Sus scrofa</name>
    <name type="common">Pig</name>
    <dbReference type="NCBI Taxonomy" id="9823"/>
</organismHost>
<gene>
    <name evidence="1" type="primary">M</name>
</gene>
<accession>Q89687</accession>
<sequence>MSLLTEVETPIRSEWGCRCNDSSDPLVAAASIIGILHLILWILDRLFFKCIYRRLEYGLKRGPSTEGLPESMREEYRQKQQSAVDVDDGHFVNIELE</sequence>
<reference key="1">
    <citation type="journal article" date="1991" name="J. Virol.">
        <title>Evolutionary analysis of the influenza A virus M gene with comparison of the M1 and M2 proteins.</title>
        <authorList>
            <person name="Ito T."/>
            <person name="Gorman O.T."/>
            <person name="Kawaoka Y."/>
            <person name="Bean W.J."/>
            <person name="Webster R.G."/>
        </authorList>
    </citation>
    <scope>NUCLEOTIDE SEQUENCE [GENOMIC RNA]</scope>
</reference>
<protein>
    <recommendedName>
        <fullName evidence="1">Matrix protein 2</fullName>
    </recommendedName>
    <alternativeName>
        <fullName evidence="1">Proton channel protein M2</fullName>
    </alternativeName>
</protein>
<comment type="function">
    <text evidence="1">Forms a proton-selective ion channel that is necessary for the efficient release of the viral genome during virus entry. After attaching to the cell surface, the virion enters the cell by endocytosis. Acidification of the endosome triggers M2 ion channel activity. The influx of protons into virion interior is believed to disrupt interactions between the viral ribonucleoprotein (RNP), matrix protein 1 (M1), and lipid bilayers, thereby freeing the viral genome from interaction with viral proteins and enabling RNA segments to migrate to the host cell nucleus, where influenza virus RNA transcription and replication occur. Also plays a role in viral proteins secretory pathway. Elevates the intravesicular pH of normally acidic compartments, such as trans-Golgi network, preventing newly formed hemagglutinin from premature switching to the fusion-active conformation.</text>
</comment>
<comment type="activity regulation">
    <text>The M2 protein from most influenza A strains is inhibited by amantadine and rimantadine, resulting in viral uncoating incapacity. Emergence of amantadine-resistant variants is usually rapid.</text>
</comment>
<comment type="subunit">
    <text evidence="1">Homotetramer; composed of two disulfide-linked dimers held together by non-covalent interactions. May interact with matrix protein 1.</text>
</comment>
<comment type="subcellular location">
    <subcellularLocation>
        <location evidence="1">Virion membrane</location>
    </subcellularLocation>
    <subcellularLocation>
        <location evidence="1">Host apical cell membrane</location>
        <topology evidence="1">Single-pass type III membrane protein</topology>
    </subcellularLocation>
    <text evidence="1">Abundantly expressed at the apical plasma membrane in infected polarized epithelial cells, in close proximity to budding and assembled virions. Minor component of virions (only 16-20 molecules/virion).</text>
</comment>
<comment type="alternative products">
    <event type="alternative splicing"/>
    <isoform>
        <id>Q89687-1</id>
        <name>M2</name>
        <sequence type="displayed"/>
    </isoform>
    <isoform>
        <id>Q67200-1</id>
        <name>M1</name>
        <sequence type="external"/>
    </isoform>
    <text>Only the first 9 residues are shared by the 2 isoforms.</text>
</comment>
<comment type="domain">
    <text evidence="1">Cytoplasmic tail plays an important role in virion assembly and morphogenesis.</text>
</comment>
<comment type="miscellaneous">
    <text evidence="1">When the channel is activated, one or more imidazole moieties of His-37 probably become bi-protonated.</text>
</comment>
<comment type="similarity">
    <text evidence="1">Belongs to the influenza viruses matrix protein M2 family.</text>
</comment>
<organism>
    <name type="scientific">Influenza A virus (strain A/Swine/May/1954 H1N1)</name>
    <dbReference type="NCBI Taxonomy" id="383535"/>
    <lineage>
        <taxon>Viruses</taxon>
        <taxon>Riboviria</taxon>
        <taxon>Orthornavirae</taxon>
        <taxon>Negarnaviricota</taxon>
        <taxon>Polyploviricotina</taxon>
        <taxon>Insthoviricetes</taxon>
        <taxon>Articulavirales</taxon>
        <taxon>Orthomyxoviridae</taxon>
        <taxon>Alphainfluenzavirus</taxon>
        <taxon>Alphainfluenzavirus influenzae</taxon>
        <taxon>Influenza A virus</taxon>
    </lineage>
</organism>
<evidence type="ECO:0000255" key="1">
    <source>
        <dbReference type="HAMAP-Rule" id="MF_04069"/>
    </source>
</evidence>